<gene>
    <name evidence="1" type="primary">PAC1</name>
    <name evidence="1" type="synonym">LIS1</name>
    <name type="ordered locus">CND02590</name>
</gene>
<proteinExistence type="inferred from homology"/>
<sequence>MAALSDRQKDELHRAMLAYLHAAGMHNAYAALQHDAALADVDPRDRAVGLLEKKWTSVIRLQKKVIDLENRNAALLAELAAAARPAAPGPFLPRPPPRHTLASHRAPVTRLAFHPTWTLLASASEDATVKLWDWEAGDMERTLKGHTKAVMDVDFDPRGGLMATCSSDLTLKLWDTANQYTNVKTLHGHDHSVSSVRFMPDGETLVSASRDKTIRVWQVSSGYCIKTFSGHAEWVREAVPSEDGRWLVSASNDQTSRIWDFSTGETKMELRGHEHVVECAVFAPVNAYPAIRELAGLKPPAPRDTRAKSPGVYAATGSRDKTIKLWDALSGQCLRTLVGHDNWIRALVFHPSGKYLLSASDDKTIKVWDLANGRCTKTIEAHSHFVTSMTWGRAVGASGGIEKVNGDASSKEPRRINVLATGSVDQTIKVWTP</sequence>
<keyword id="KW-0131">Cell cycle</keyword>
<keyword id="KW-0132">Cell division</keyword>
<keyword id="KW-0175">Coiled coil</keyword>
<keyword id="KW-0963">Cytoplasm</keyword>
<keyword id="KW-0206">Cytoskeleton</keyword>
<keyword id="KW-0493">Microtubule</keyword>
<keyword id="KW-0498">Mitosis</keyword>
<keyword id="KW-1185">Reference proteome</keyword>
<keyword id="KW-0677">Repeat</keyword>
<keyword id="KW-0813">Transport</keyword>
<keyword id="KW-0853">WD repeat</keyword>
<comment type="function">
    <text evidence="1">Positively regulates the activity of the minus-end directed microtubule motor protein dynein. Plays a central role in positioning the mitotic spindle at the bud neck during cell division. Targets cytoplasmic dynein to microtubule plus ends, thereby promoting dynein-mediated microtubule sliding along the bud cortex and consequently the movement of the mitotic spindle to the bud neck.</text>
</comment>
<comment type="subunit">
    <text evidence="1">Self-associates. Interacts with NDL1 and dynein.</text>
</comment>
<comment type="subcellular location">
    <subcellularLocation>
        <location evidence="1">Cytoplasm</location>
        <location evidence="1">Cytoskeleton</location>
    </subcellularLocation>
    <subcellularLocation>
        <location evidence="1">Cytoplasm</location>
        <location evidence="1">Cytoskeleton</location>
        <location evidence="1">Spindle pole</location>
    </subcellularLocation>
    <text evidence="1">Localizes to the plus ends of microtubules and the mitotic spindle poles.</text>
</comment>
<comment type="domain">
    <text evidence="1">Dimerization mediated by the LisH domain may be required to activate dynein.</text>
</comment>
<comment type="similarity">
    <text evidence="1">Belongs to the WD repeat LIS1/nudF family.</text>
</comment>
<comment type="sequence caution" evidence="2">
    <conflict type="erroneous gene model prediction">
        <sequence resource="EMBL-CDS" id="AAW43166"/>
    </conflict>
</comment>
<evidence type="ECO:0000255" key="1">
    <source>
        <dbReference type="HAMAP-Rule" id="MF_03141"/>
    </source>
</evidence>
<evidence type="ECO:0000305" key="2"/>
<protein>
    <recommendedName>
        <fullName evidence="1">Nuclear distribution protein PAC1</fullName>
    </recommendedName>
    <alternativeName>
        <fullName evidence="1">Lissencephaly-1 homolog</fullName>
        <shortName evidence="1">LIS-1</shortName>
    </alternativeName>
    <alternativeName>
        <fullName evidence="1">nudF homolog</fullName>
    </alternativeName>
</protein>
<accession>P0CS42</accession>
<accession>Q55TS8</accession>
<accession>Q5KIK9</accession>
<reference key="1">
    <citation type="journal article" date="2005" name="Science">
        <title>The genome of the basidiomycetous yeast and human pathogen Cryptococcus neoformans.</title>
        <authorList>
            <person name="Loftus B.J."/>
            <person name="Fung E."/>
            <person name="Roncaglia P."/>
            <person name="Rowley D."/>
            <person name="Amedeo P."/>
            <person name="Bruno D."/>
            <person name="Vamathevan J."/>
            <person name="Miranda M."/>
            <person name="Anderson I.J."/>
            <person name="Fraser J.A."/>
            <person name="Allen J.E."/>
            <person name="Bosdet I.E."/>
            <person name="Brent M.R."/>
            <person name="Chiu R."/>
            <person name="Doering T.L."/>
            <person name="Donlin M.J."/>
            <person name="D'Souza C.A."/>
            <person name="Fox D.S."/>
            <person name="Grinberg V."/>
            <person name="Fu J."/>
            <person name="Fukushima M."/>
            <person name="Haas B.J."/>
            <person name="Huang J.C."/>
            <person name="Janbon G."/>
            <person name="Jones S.J.M."/>
            <person name="Koo H.L."/>
            <person name="Krzywinski M.I."/>
            <person name="Kwon-Chung K.J."/>
            <person name="Lengeler K.B."/>
            <person name="Maiti R."/>
            <person name="Marra M.A."/>
            <person name="Marra R.E."/>
            <person name="Mathewson C.A."/>
            <person name="Mitchell T.G."/>
            <person name="Pertea M."/>
            <person name="Riggs F.R."/>
            <person name="Salzberg S.L."/>
            <person name="Schein J.E."/>
            <person name="Shvartsbeyn A."/>
            <person name="Shin H."/>
            <person name="Shumway M."/>
            <person name="Specht C.A."/>
            <person name="Suh B.B."/>
            <person name="Tenney A."/>
            <person name="Utterback T.R."/>
            <person name="Wickes B.L."/>
            <person name="Wortman J.R."/>
            <person name="Wye N.H."/>
            <person name="Kronstad J.W."/>
            <person name="Lodge J.K."/>
            <person name="Heitman J."/>
            <person name="Davis R.W."/>
            <person name="Fraser C.M."/>
            <person name="Hyman R.W."/>
        </authorList>
    </citation>
    <scope>NUCLEOTIDE SEQUENCE [LARGE SCALE GENOMIC DNA]</scope>
    <source>
        <strain>JEC21 / ATCC MYA-565</strain>
    </source>
</reference>
<feature type="chain" id="PRO_0000240424" description="Nuclear distribution protein PAC1">
    <location>
        <begin position="1"/>
        <end position="433"/>
    </location>
</feature>
<feature type="domain" description="LisH" evidence="1">
    <location>
        <begin position="8"/>
        <end position="40"/>
    </location>
</feature>
<feature type="repeat" description="WD 1">
    <location>
        <begin position="103"/>
        <end position="144"/>
    </location>
</feature>
<feature type="repeat" description="WD 2">
    <location>
        <begin position="146"/>
        <end position="184"/>
    </location>
</feature>
<feature type="repeat" description="WD 3">
    <location>
        <begin position="188"/>
        <end position="227"/>
    </location>
</feature>
<feature type="repeat" description="WD 4">
    <location>
        <begin position="230"/>
        <end position="269"/>
    </location>
</feature>
<feature type="repeat" description="WD 5">
    <location>
        <begin position="272"/>
        <end position="336"/>
    </location>
</feature>
<feature type="repeat" description="WD 6">
    <location>
        <begin position="339"/>
        <end position="378"/>
    </location>
</feature>
<feature type="repeat" description="WD 7">
    <location>
        <begin position="381"/>
        <end position="429"/>
    </location>
</feature>
<feature type="coiled-coil region" evidence="1">
    <location>
        <begin position="57"/>
        <end position="84"/>
    </location>
</feature>
<name>LIS1_CRYNJ</name>
<organism>
    <name type="scientific">Cryptococcus neoformans var. neoformans serotype D (strain JEC21 / ATCC MYA-565)</name>
    <name type="common">Filobasidiella neoformans</name>
    <dbReference type="NCBI Taxonomy" id="214684"/>
    <lineage>
        <taxon>Eukaryota</taxon>
        <taxon>Fungi</taxon>
        <taxon>Dikarya</taxon>
        <taxon>Basidiomycota</taxon>
        <taxon>Agaricomycotina</taxon>
        <taxon>Tremellomycetes</taxon>
        <taxon>Tremellales</taxon>
        <taxon>Cryptococcaceae</taxon>
        <taxon>Cryptococcus</taxon>
        <taxon>Cryptococcus neoformans species complex</taxon>
    </lineage>
</organism>
<dbReference type="EMBL" id="AE017344">
    <property type="protein sequence ID" value="AAW43166.1"/>
    <property type="status" value="ALT_SEQ"/>
    <property type="molecule type" value="Genomic_DNA"/>
</dbReference>
<dbReference type="RefSeq" id="XP_570473.1">
    <property type="nucleotide sequence ID" value="XM_570473.1"/>
</dbReference>
<dbReference type="SMR" id="P0CS42"/>
<dbReference type="STRING" id="214684.P0CS42"/>
<dbReference type="PaxDb" id="214684-P0CS42"/>
<dbReference type="EnsemblFungi" id="AAW43166">
    <property type="protein sequence ID" value="AAW43166"/>
    <property type="gene ID" value="CND02590"/>
</dbReference>
<dbReference type="GeneID" id="3257176"/>
<dbReference type="KEGG" id="cne:CND02590"/>
<dbReference type="eggNOG" id="KOG0295">
    <property type="taxonomic scope" value="Eukaryota"/>
</dbReference>
<dbReference type="InParanoid" id="P0CS42"/>
<dbReference type="OrthoDB" id="10264588at2759"/>
<dbReference type="Proteomes" id="UP000002149">
    <property type="component" value="Chromosome 4"/>
</dbReference>
<dbReference type="GO" id="GO:0005881">
    <property type="term" value="C:cytoplasmic microtubule"/>
    <property type="evidence" value="ECO:0000318"/>
    <property type="project" value="GO_Central"/>
</dbReference>
<dbReference type="GO" id="GO:0000776">
    <property type="term" value="C:kinetochore"/>
    <property type="evidence" value="ECO:0000318"/>
    <property type="project" value="GO_Central"/>
</dbReference>
<dbReference type="GO" id="GO:0005875">
    <property type="term" value="C:microtubule associated complex"/>
    <property type="evidence" value="ECO:0000318"/>
    <property type="project" value="GO_Central"/>
</dbReference>
<dbReference type="GO" id="GO:0005635">
    <property type="term" value="C:nuclear envelope"/>
    <property type="evidence" value="ECO:0000318"/>
    <property type="project" value="GO_Central"/>
</dbReference>
<dbReference type="GO" id="GO:0000922">
    <property type="term" value="C:spindle pole"/>
    <property type="evidence" value="ECO:0007669"/>
    <property type="project" value="UniProtKB-SubCell"/>
</dbReference>
<dbReference type="GO" id="GO:0070840">
    <property type="term" value="F:dynein complex binding"/>
    <property type="evidence" value="ECO:0000318"/>
    <property type="project" value="GO_Central"/>
</dbReference>
<dbReference type="GO" id="GO:0051010">
    <property type="term" value="F:microtubule plus-end binding"/>
    <property type="evidence" value="ECO:0000318"/>
    <property type="project" value="GO_Central"/>
</dbReference>
<dbReference type="GO" id="GO:0051301">
    <property type="term" value="P:cell division"/>
    <property type="evidence" value="ECO:0007669"/>
    <property type="project" value="UniProtKB-KW"/>
</dbReference>
<dbReference type="GO" id="GO:0000132">
    <property type="term" value="P:establishment of mitotic spindle orientation"/>
    <property type="evidence" value="ECO:0000318"/>
    <property type="project" value="GO_Central"/>
</dbReference>
<dbReference type="GO" id="GO:0031023">
    <property type="term" value="P:microtubule organizing center organization"/>
    <property type="evidence" value="ECO:0000318"/>
    <property type="project" value="GO_Central"/>
</dbReference>
<dbReference type="GO" id="GO:0051012">
    <property type="term" value="P:microtubule sliding"/>
    <property type="evidence" value="ECO:0007669"/>
    <property type="project" value="UniProtKB-UniRule"/>
</dbReference>
<dbReference type="GO" id="GO:0007097">
    <property type="term" value="P:nuclear migration"/>
    <property type="evidence" value="ECO:0000318"/>
    <property type="project" value="GO_Central"/>
</dbReference>
<dbReference type="GO" id="GO:0047496">
    <property type="term" value="P:vesicle transport along microtubule"/>
    <property type="evidence" value="ECO:0000318"/>
    <property type="project" value="GO_Central"/>
</dbReference>
<dbReference type="CDD" id="cd00200">
    <property type="entry name" value="WD40"/>
    <property type="match status" value="1"/>
</dbReference>
<dbReference type="FunFam" id="2.130.10.10:FF:000342">
    <property type="entry name" value="Nuclear distribution protein PAC1"/>
    <property type="match status" value="1"/>
</dbReference>
<dbReference type="FunFam" id="1.20.960.30:FF:000002">
    <property type="entry name" value="Platelet-activating factor acetylhydrolase ib"/>
    <property type="match status" value="1"/>
</dbReference>
<dbReference type="Gene3D" id="1.20.960.30">
    <property type="match status" value="1"/>
</dbReference>
<dbReference type="Gene3D" id="2.130.10.10">
    <property type="entry name" value="YVTN repeat-like/Quinoprotein amine dehydrogenase"/>
    <property type="match status" value="1"/>
</dbReference>
<dbReference type="HAMAP" id="MF_03141">
    <property type="entry name" value="lis1"/>
    <property type="match status" value="1"/>
</dbReference>
<dbReference type="InterPro" id="IPR017252">
    <property type="entry name" value="Dynein_regulator_LIS1"/>
</dbReference>
<dbReference type="InterPro" id="IPR020472">
    <property type="entry name" value="G-protein_beta_WD-40_rep"/>
</dbReference>
<dbReference type="InterPro" id="IPR037190">
    <property type="entry name" value="LIS1_N"/>
</dbReference>
<dbReference type="InterPro" id="IPR006594">
    <property type="entry name" value="LisH"/>
</dbReference>
<dbReference type="InterPro" id="IPR056795">
    <property type="entry name" value="PAC1-like_LisH-like_dom"/>
</dbReference>
<dbReference type="InterPro" id="IPR015943">
    <property type="entry name" value="WD40/YVTN_repeat-like_dom_sf"/>
</dbReference>
<dbReference type="InterPro" id="IPR019775">
    <property type="entry name" value="WD40_repeat_CS"/>
</dbReference>
<dbReference type="InterPro" id="IPR036322">
    <property type="entry name" value="WD40_repeat_dom_sf"/>
</dbReference>
<dbReference type="InterPro" id="IPR001680">
    <property type="entry name" value="WD40_rpt"/>
</dbReference>
<dbReference type="PANTHER" id="PTHR19848:SF8">
    <property type="entry name" value="F-BOX AND WD REPEAT DOMAIN CONTAINING 7"/>
    <property type="match status" value="1"/>
</dbReference>
<dbReference type="PANTHER" id="PTHR19848">
    <property type="entry name" value="WD40 REPEAT PROTEIN"/>
    <property type="match status" value="1"/>
</dbReference>
<dbReference type="Pfam" id="PF24951">
    <property type="entry name" value="LisH_PAC1"/>
    <property type="match status" value="1"/>
</dbReference>
<dbReference type="Pfam" id="PF00400">
    <property type="entry name" value="WD40"/>
    <property type="match status" value="7"/>
</dbReference>
<dbReference type="PIRSF" id="PIRSF037647">
    <property type="entry name" value="Dynein_regulator_Lis1"/>
    <property type="match status" value="1"/>
</dbReference>
<dbReference type="PRINTS" id="PR00320">
    <property type="entry name" value="GPROTEINBRPT"/>
</dbReference>
<dbReference type="SMART" id="SM00320">
    <property type="entry name" value="WD40"/>
    <property type="match status" value="7"/>
</dbReference>
<dbReference type="SUPFAM" id="SSF109925">
    <property type="entry name" value="Lissencephaly-1 protein (Lis-1, PAF-AH alpha) N-terminal domain"/>
    <property type="match status" value="1"/>
</dbReference>
<dbReference type="SUPFAM" id="SSF50978">
    <property type="entry name" value="WD40 repeat-like"/>
    <property type="match status" value="1"/>
</dbReference>
<dbReference type="PROSITE" id="PS50896">
    <property type="entry name" value="LISH"/>
    <property type="match status" value="1"/>
</dbReference>
<dbReference type="PROSITE" id="PS00678">
    <property type="entry name" value="WD_REPEATS_1"/>
    <property type="match status" value="4"/>
</dbReference>
<dbReference type="PROSITE" id="PS50082">
    <property type="entry name" value="WD_REPEATS_2"/>
    <property type="match status" value="7"/>
</dbReference>
<dbReference type="PROSITE" id="PS50294">
    <property type="entry name" value="WD_REPEATS_REGION"/>
    <property type="match status" value="1"/>
</dbReference>